<sequence length="500" mass="56129">MKFLIKSLAVATISILGCLQTALAEEAKTESLTDKAVKHEKLGVKIESANHLFAEKYPLQYDSWKSTAKSTDRGSALEADPRYVILWAGYAFAKDYNKPRGHFYAVTDVRDILRTGAPKDENDGPQPMACWTCKGPDVPRLIEEKGERGYFDPKWAKYGAEIVNSIGCADCHDTTSEEFKQGKPALRVARPHVLRALNTVGWKFEDLDKHGKRPAVCANCHVEYYFKNKTDVTFPWDKGVDVDSIEKYYDEINFTDWTHALSKAPMLKTQHPDFEVWSQGTHGKNGVTCIDCHMPKVKDKDGKVYTDHKIGNPFDQFEATCKTCHEQSKETLEKRVKEYKHEVKEAMIRLEDQLVKAHFEAKAAWEAGATQEEMKEILMAIRHAQWRWDYSAAGHGNHFHAPDVMLRTIATGIDRAADARAKLGVVLAKHGVTTPVAIPDISTKEKAQLAIGLDIPKEQAAKDEFLKTVVPQWEKEARAKGLLPAEEADKPVAAPKAEAK</sequence>
<evidence type="ECO:0000255" key="1">
    <source>
        <dbReference type="HAMAP-Rule" id="MF_01182"/>
    </source>
</evidence>
<evidence type="ECO:0000256" key="2">
    <source>
        <dbReference type="SAM" id="MobiDB-lite"/>
    </source>
</evidence>
<keyword id="KW-0106">Calcium</keyword>
<keyword id="KW-0249">Electron transport</keyword>
<keyword id="KW-0349">Heme</keyword>
<keyword id="KW-0408">Iron</keyword>
<keyword id="KW-0479">Metal-binding</keyword>
<keyword id="KW-0560">Oxidoreductase</keyword>
<keyword id="KW-0574">Periplasm</keyword>
<keyword id="KW-0732">Signal</keyword>
<keyword id="KW-0813">Transport</keyword>
<accession>Q06PW6</accession>
<proteinExistence type="inferred from homology"/>
<name>NRFA_MANHA</name>
<protein>
    <recommendedName>
        <fullName evidence="1">Cytochrome c-552</fullName>
        <ecNumber evidence="1">1.7.2.2</ecNumber>
    </recommendedName>
    <alternativeName>
        <fullName evidence="1">Ammonia-forming cytochrome c nitrite reductase</fullName>
        <shortName evidence="1">Cytochrome c nitrite reductase</shortName>
    </alternativeName>
</protein>
<feature type="signal peptide" evidence="1">
    <location>
        <begin position="1"/>
        <end position="24"/>
    </location>
</feature>
<feature type="chain" id="PRO_0000268969" description="Cytochrome c-552">
    <location>
        <begin position="25"/>
        <end position="500"/>
    </location>
</feature>
<feature type="region of interest" description="Disordered" evidence="2">
    <location>
        <begin position="477"/>
        <end position="500"/>
    </location>
</feature>
<feature type="binding site" description="axial binding residue" evidence="1">
    <location>
        <position position="102"/>
    </location>
    <ligand>
        <name>heme c</name>
        <dbReference type="ChEBI" id="CHEBI:61717"/>
        <label>3</label>
    </ligand>
    <ligandPart>
        <name>Fe</name>
        <dbReference type="ChEBI" id="CHEBI:18248"/>
    </ligandPart>
</feature>
<feature type="binding site" description="covalent" evidence="1">
    <location>
        <position position="130"/>
    </location>
    <ligand>
        <name>heme c</name>
        <dbReference type="ChEBI" id="CHEBI:61717"/>
        <label>1</label>
    </ligand>
</feature>
<feature type="binding site" description="covalent" evidence="1">
    <location>
        <position position="133"/>
    </location>
    <ligand>
        <name>heme c</name>
        <dbReference type="ChEBI" id="CHEBI:61717"/>
        <label>1</label>
    </ligand>
</feature>
<feature type="binding site" description="axial binding residue" evidence="1">
    <location>
        <position position="134"/>
    </location>
    <ligand>
        <name>heme c</name>
        <dbReference type="ChEBI" id="CHEBI:61717"/>
        <label>1</label>
    </ligand>
    <ligandPart>
        <name>Fe</name>
        <dbReference type="ChEBI" id="CHEBI:18248"/>
    </ligandPart>
</feature>
<feature type="binding site" description="covalent" evidence="1">
    <location>
        <position position="168"/>
    </location>
    <ligand>
        <name>heme c</name>
        <dbReference type="ChEBI" id="CHEBI:61717"/>
        <label>2</label>
    </ligand>
</feature>
<feature type="binding site" description="covalent" evidence="1">
    <location>
        <position position="171"/>
    </location>
    <ligand>
        <name>heme c</name>
        <dbReference type="ChEBI" id="CHEBI:61717"/>
        <label>2</label>
    </ligand>
</feature>
<feature type="binding site" description="axial binding residue" evidence="1">
    <location>
        <position position="172"/>
    </location>
    <ligand>
        <name>heme c</name>
        <dbReference type="ChEBI" id="CHEBI:61717"/>
        <label>2</label>
    </ligand>
    <ligandPart>
        <name>Fe</name>
        <dbReference type="ChEBI" id="CHEBI:18248"/>
    </ligandPart>
</feature>
<feature type="binding site" description="covalent" evidence="1">
    <location>
        <position position="217"/>
    </location>
    <ligand>
        <name>heme c</name>
        <dbReference type="ChEBI" id="CHEBI:61717"/>
        <label>3</label>
    </ligand>
</feature>
<feature type="binding site" description="covalent" evidence="1">
    <location>
        <position position="220"/>
    </location>
    <ligand>
        <name>heme c</name>
        <dbReference type="ChEBI" id="CHEBI:61717"/>
        <label>3</label>
    </ligand>
</feature>
<feature type="binding site" description="axial binding residue" evidence="1">
    <location>
        <position position="221"/>
    </location>
    <ligand>
        <name>heme c</name>
        <dbReference type="ChEBI" id="CHEBI:61717"/>
        <label>3</label>
    </ligand>
    <ligandPart>
        <name>Fe</name>
        <dbReference type="ChEBI" id="CHEBI:18248"/>
    </ligandPart>
</feature>
<feature type="binding site" evidence="1">
    <location>
        <position position="223"/>
    </location>
    <ligand>
        <name>Ca(2+)</name>
        <dbReference type="ChEBI" id="CHEBI:29108"/>
    </ligand>
</feature>
<feature type="binding site" evidence="1">
    <location>
        <position position="224"/>
    </location>
    <ligand>
        <name>Ca(2+)</name>
        <dbReference type="ChEBI" id="CHEBI:29108"/>
    </ligand>
</feature>
<feature type="binding site" evidence="1">
    <location>
        <position position="224"/>
    </location>
    <ligand>
        <name>substrate</name>
    </ligand>
</feature>
<feature type="binding site" evidence="1">
    <location>
        <position position="268"/>
    </location>
    <ligand>
        <name>Ca(2+)</name>
        <dbReference type="ChEBI" id="CHEBI:29108"/>
    </ligand>
</feature>
<feature type="binding site" evidence="1">
    <location>
        <position position="270"/>
    </location>
    <ligand>
        <name>Ca(2+)</name>
        <dbReference type="ChEBI" id="CHEBI:29108"/>
    </ligand>
</feature>
<feature type="binding site" evidence="1">
    <location>
        <position position="271"/>
    </location>
    <ligand>
        <name>substrate</name>
    </ligand>
</feature>
<feature type="binding site" description="axial binding residue" evidence="1">
    <location>
        <position position="282"/>
    </location>
    <ligand>
        <name>heme c</name>
        <dbReference type="ChEBI" id="CHEBI:61717"/>
        <label>5</label>
    </ligand>
    <ligandPart>
        <name>Fe</name>
        <dbReference type="ChEBI" id="CHEBI:18248"/>
    </ligandPart>
</feature>
<feature type="binding site" description="covalent" evidence="1">
    <location>
        <position position="289"/>
    </location>
    <ligand>
        <name>heme c</name>
        <dbReference type="ChEBI" id="CHEBI:61717"/>
        <label>4</label>
    </ligand>
</feature>
<feature type="binding site" description="covalent" evidence="1">
    <location>
        <position position="292"/>
    </location>
    <ligand>
        <name>heme c</name>
        <dbReference type="ChEBI" id="CHEBI:61717"/>
        <label>4</label>
    </ligand>
</feature>
<feature type="binding site" description="axial binding residue" evidence="1">
    <location>
        <position position="293"/>
    </location>
    <ligand>
        <name>heme c</name>
        <dbReference type="ChEBI" id="CHEBI:61717"/>
        <label>4</label>
    </ligand>
    <ligandPart>
        <name>Fe</name>
        <dbReference type="ChEBI" id="CHEBI:18248"/>
    </ligandPart>
</feature>
<feature type="binding site" description="axial binding residue" evidence="1">
    <location>
        <position position="308"/>
    </location>
    <ligand>
        <name>heme c</name>
        <dbReference type="ChEBI" id="CHEBI:61717"/>
        <label>2</label>
    </ligand>
    <ligandPart>
        <name>Fe</name>
        <dbReference type="ChEBI" id="CHEBI:18248"/>
    </ligandPart>
</feature>
<feature type="binding site" description="covalent" evidence="1">
    <location>
        <position position="321"/>
    </location>
    <ligand>
        <name>heme c</name>
        <dbReference type="ChEBI" id="CHEBI:61717"/>
        <label>5</label>
    </ligand>
</feature>
<feature type="binding site" description="covalent" evidence="1">
    <location>
        <position position="324"/>
    </location>
    <ligand>
        <name>heme c</name>
        <dbReference type="ChEBI" id="CHEBI:61717"/>
        <label>5</label>
    </ligand>
</feature>
<feature type="binding site" description="axial binding residue" evidence="1">
    <location>
        <position position="325"/>
    </location>
    <ligand>
        <name>heme c</name>
        <dbReference type="ChEBI" id="CHEBI:61717"/>
        <label>5</label>
    </ligand>
    <ligandPart>
        <name>Fe</name>
        <dbReference type="ChEBI" id="CHEBI:18248"/>
    </ligandPart>
</feature>
<feature type="binding site" description="axial binding residue" evidence="1">
    <location>
        <position position="400"/>
    </location>
    <ligand>
        <name>heme c</name>
        <dbReference type="ChEBI" id="CHEBI:61717"/>
        <label>4</label>
    </ligand>
    <ligandPart>
        <name>Fe</name>
        <dbReference type="ChEBI" id="CHEBI:18248"/>
    </ligandPart>
</feature>
<gene>
    <name evidence="1" type="primary">nrfA</name>
</gene>
<organism>
    <name type="scientific">Mannheimia haemolytica</name>
    <name type="common">Pasteurella haemolytica</name>
    <dbReference type="NCBI Taxonomy" id="75985"/>
    <lineage>
        <taxon>Bacteria</taxon>
        <taxon>Pseudomonadati</taxon>
        <taxon>Pseudomonadota</taxon>
        <taxon>Gammaproteobacteria</taxon>
        <taxon>Pasteurellales</taxon>
        <taxon>Pasteurellaceae</taxon>
        <taxon>Mannheimia</taxon>
    </lineage>
</organism>
<reference key="1">
    <citation type="submission" date="2006-06" db="EMBL/GenBank/DDBJ databases">
        <authorList>
            <person name="Roehrig S.C."/>
            <person name="Tran H.Q."/>
            <person name="Spehr V."/>
            <person name="Gunkel N."/>
            <person name="Selzer P.M."/>
            <person name="Ullrich H.J."/>
        </authorList>
    </citation>
    <scope>NUCLEOTIDE SEQUENCE [GENOMIC DNA]</scope>
    <source>
        <strain>Serotype A1</strain>
    </source>
</reference>
<dbReference type="EC" id="1.7.2.2" evidence="1"/>
<dbReference type="EMBL" id="DQ680244">
    <property type="protein sequence ID" value="ABG89201.1"/>
    <property type="molecule type" value="Genomic_DNA"/>
</dbReference>
<dbReference type="RefSeq" id="WP_006249706.1">
    <property type="nucleotide sequence ID" value="NZ_VAJK01000010.1"/>
</dbReference>
<dbReference type="SMR" id="Q06PW6"/>
<dbReference type="STRING" id="75985.WC39_11060"/>
<dbReference type="GeneID" id="67369916"/>
<dbReference type="OrthoDB" id="9780421at2"/>
<dbReference type="UniPathway" id="UPA00653"/>
<dbReference type="GO" id="GO:0030288">
    <property type="term" value="C:outer membrane-bounded periplasmic space"/>
    <property type="evidence" value="ECO:0007669"/>
    <property type="project" value="TreeGrafter"/>
</dbReference>
<dbReference type="GO" id="GO:0005509">
    <property type="term" value="F:calcium ion binding"/>
    <property type="evidence" value="ECO:0007669"/>
    <property type="project" value="UniProtKB-UniRule"/>
</dbReference>
<dbReference type="GO" id="GO:0020037">
    <property type="term" value="F:heme binding"/>
    <property type="evidence" value="ECO:0007669"/>
    <property type="project" value="InterPro"/>
</dbReference>
<dbReference type="GO" id="GO:0005506">
    <property type="term" value="F:iron ion binding"/>
    <property type="evidence" value="ECO:0007669"/>
    <property type="project" value="UniProtKB-UniRule"/>
</dbReference>
<dbReference type="GO" id="GO:0042279">
    <property type="term" value="F:nitrite reductase (cytochrome, ammonia-forming) activity"/>
    <property type="evidence" value="ECO:0007669"/>
    <property type="project" value="UniProtKB-UniRule"/>
</dbReference>
<dbReference type="GO" id="GO:0019645">
    <property type="term" value="P:anaerobic electron transport chain"/>
    <property type="evidence" value="ECO:0007669"/>
    <property type="project" value="TreeGrafter"/>
</dbReference>
<dbReference type="GO" id="GO:0042128">
    <property type="term" value="P:nitrate assimilation"/>
    <property type="evidence" value="ECO:0007669"/>
    <property type="project" value="UniProtKB-UniRule"/>
</dbReference>
<dbReference type="CDD" id="cd00548">
    <property type="entry name" value="NrfA-like"/>
    <property type="match status" value="1"/>
</dbReference>
<dbReference type="FunFam" id="1.10.1130.10:FF:000002">
    <property type="entry name" value="Cytochrome c-552"/>
    <property type="match status" value="1"/>
</dbReference>
<dbReference type="FunFam" id="1.20.140.10:FF:000014">
    <property type="entry name" value="Cytochrome c-552"/>
    <property type="match status" value="1"/>
</dbReference>
<dbReference type="Gene3D" id="1.20.140.10">
    <property type="entry name" value="Butyryl-CoA Dehydrogenase, subunit A, domain 3"/>
    <property type="match status" value="1"/>
</dbReference>
<dbReference type="Gene3D" id="1.10.1130.10">
    <property type="entry name" value="Flavocytochrome C3, Chain A"/>
    <property type="match status" value="1"/>
</dbReference>
<dbReference type="HAMAP" id="MF_01182">
    <property type="entry name" value="Cytochrom_C552"/>
    <property type="match status" value="1"/>
</dbReference>
<dbReference type="InterPro" id="IPR003321">
    <property type="entry name" value="Cyt_c552"/>
</dbReference>
<dbReference type="InterPro" id="IPR017570">
    <property type="entry name" value="Cyt_c_NO2Rdtase_formate-dep"/>
</dbReference>
<dbReference type="InterPro" id="IPR036280">
    <property type="entry name" value="Multihaem_cyt_sf"/>
</dbReference>
<dbReference type="NCBIfam" id="TIGR03152">
    <property type="entry name" value="cyto_c552_HCOOH"/>
    <property type="match status" value="1"/>
</dbReference>
<dbReference type="NCBIfam" id="NF008339">
    <property type="entry name" value="PRK11125.1"/>
    <property type="match status" value="1"/>
</dbReference>
<dbReference type="PANTHER" id="PTHR30633:SF0">
    <property type="entry name" value="CYTOCHROME C-552"/>
    <property type="match status" value="1"/>
</dbReference>
<dbReference type="PANTHER" id="PTHR30633">
    <property type="entry name" value="CYTOCHROME C-552 RESPIRATORY NITRITE REDUCTASE"/>
    <property type="match status" value="1"/>
</dbReference>
<dbReference type="Pfam" id="PF02335">
    <property type="entry name" value="Cytochrom_C552"/>
    <property type="match status" value="1"/>
</dbReference>
<dbReference type="PIRSF" id="PIRSF000243">
    <property type="entry name" value="Cyt_c552"/>
    <property type="match status" value="1"/>
</dbReference>
<dbReference type="SUPFAM" id="SSF48695">
    <property type="entry name" value="Multiheme cytochromes"/>
    <property type="match status" value="1"/>
</dbReference>
<dbReference type="PROSITE" id="PS51008">
    <property type="entry name" value="MULTIHEME_CYTC"/>
    <property type="match status" value="1"/>
</dbReference>
<comment type="function">
    <text evidence="1">Catalyzes the reduction of nitrite to ammonia, consuming six electrons in the process.</text>
</comment>
<comment type="catalytic activity">
    <reaction evidence="1">
        <text>6 Fe(III)-[cytochrome c] + NH4(+) + 2 H2O = 6 Fe(II)-[cytochrome c] + nitrite + 8 H(+)</text>
        <dbReference type="Rhea" id="RHEA:13089"/>
        <dbReference type="Rhea" id="RHEA-COMP:10350"/>
        <dbReference type="Rhea" id="RHEA-COMP:14399"/>
        <dbReference type="ChEBI" id="CHEBI:15377"/>
        <dbReference type="ChEBI" id="CHEBI:15378"/>
        <dbReference type="ChEBI" id="CHEBI:16301"/>
        <dbReference type="ChEBI" id="CHEBI:28938"/>
        <dbReference type="ChEBI" id="CHEBI:29033"/>
        <dbReference type="ChEBI" id="CHEBI:29034"/>
        <dbReference type="EC" id="1.7.2.2"/>
    </reaction>
</comment>
<comment type="cofactor">
    <cofactor evidence="1">
        <name>Ca(2+)</name>
        <dbReference type="ChEBI" id="CHEBI:29108"/>
    </cofactor>
    <text evidence="1">Binds 1 Ca(2+) ion per monomer.</text>
</comment>
<comment type="cofactor">
    <cofactor evidence="1">
        <name>heme c</name>
        <dbReference type="ChEBI" id="CHEBI:61717"/>
    </cofactor>
    <text evidence="1">Binds 5 heme c groups covalently per monomer.</text>
</comment>
<comment type="pathway">
    <text evidence="1">Nitrogen metabolism; nitrate reduction (assimilation).</text>
</comment>
<comment type="subcellular location">
    <subcellularLocation>
        <location evidence="1">Periplasm</location>
    </subcellularLocation>
</comment>
<comment type="similarity">
    <text evidence="1">Belongs to the cytochrome c-552 family.</text>
</comment>